<protein>
    <recommendedName>
        <fullName evidence="1">ATP synthase subunit beta</fullName>
        <ecNumber evidence="1">7.1.2.2</ecNumber>
    </recommendedName>
    <alternativeName>
        <fullName evidence="1">ATP synthase F1 sector subunit beta</fullName>
    </alternativeName>
    <alternativeName>
        <fullName evidence="1">F-ATPase subunit beta</fullName>
    </alternativeName>
</protein>
<reference key="1">
    <citation type="submission" date="2008-01" db="EMBL/GenBank/DDBJ databases">
        <title>Complete sequence of Shewanella halifaxensis HAW-EB4.</title>
        <authorList>
            <consortium name="US DOE Joint Genome Institute"/>
            <person name="Copeland A."/>
            <person name="Lucas S."/>
            <person name="Lapidus A."/>
            <person name="Glavina del Rio T."/>
            <person name="Dalin E."/>
            <person name="Tice H."/>
            <person name="Bruce D."/>
            <person name="Goodwin L."/>
            <person name="Pitluck S."/>
            <person name="Sims D."/>
            <person name="Brettin T."/>
            <person name="Detter J.C."/>
            <person name="Han C."/>
            <person name="Kuske C.R."/>
            <person name="Schmutz J."/>
            <person name="Larimer F."/>
            <person name="Land M."/>
            <person name="Hauser L."/>
            <person name="Kyrpides N."/>
            <person name="Kim E."/>
            <person name="Zhao J.-S."/>
            <person name="Richardson P."/>
        </authorList>
    </citation>
    <scope>NUCLEOTIDE SEQUENCE [LARGE SCALE GENOMIC DNA]</scope>
    <source>
        <strain>HAW-EB4</strain>
    </source>
</reference>
<dbReference type="EC" id="7.1.2.2" evidence="1"/>
<dbReference type="EMBL" id="CP000931">
    <property type="protein sequence ID" value="ABZ78834.1"/>
    <property type="molecule type" value="Genomic_DNA"/>
</dbReference>
<dbReference type="RefSeq" id="WP_012279338.1">
    <property type="nucleotide sequence ID" value="NC_010334.1"/>
</dbReference>
<dbReference type="SMR" id="B0TQF4"/>
<dbReference type="STRING" id="458817.Shal_4294"/>
<dbReference type="KEGG" id="shl:Shal_4294"/>
<dbReference type="eggNOG" id="COG0055">
    <property type="taxonomic scope" value="Bacteria"/>
</dbReference>
<dbReference type="HOGENOM" id="CLU_022398_0_2_6"/>
<dbReference type="OrthoDB" id="9801639at2"/>
<dbReference type="Proteomes" id="UP000001317">
    <property type="component" value="Chromosome"/>
</dbReference>
<dbReference type="GO" id="GO:0005886">
    <property type="term" value="C:plasma membrane"/>
    <property type="evidence" value="ECO:0007669"/>
    <property type="project" value="UniProtKB-SubCell"/>
</dbReference>
<dbReference type="GO" id="GO:0045259">
    <property type="term" value="C:proton-transporting ATP synthase complex"/>
    <property type="evidence" value="ECO:0007669"/>
    <property type="project" value="UniProtKB-KW"/>
</dbReference>
<dbReference type="GO" id="GO:0005524">
    <property type="term" value="F:ATP binding"/>
    <property type="evidence" value="ECO:0007669"/>
    <property type="project" value="UniProtKB-UniRule"/>
</dbReference>
<dbReference type="GO" id="GO:0016887">
    <property type="term" value="F:ATP hydrolysis activity"/>
    <property type="evidence" value="ECO:0007669"/>
    <property type="project" value="InterPro"/>
</dbReference>
<dbReference type="GO" id="GO:0046933">
    <property type="term" value="F:proton-transporting ATP synthase activity, rotational mechanism"/>
    <property type="evidence" value="ECO:0007669"/>
    <property type="project" value="UniProtKB-UniRule"/>
</dbReference>
<dbReference type="CDD" id="cd18110">
    <property type="entry name" value="ATP-synt_F1_beta_C"/>
    <property type="match status" value="1"/>
</dbReference>
<dbReference type="CDD" id="cd18115">
    <property type="entry name" value="ATP-synt_F1_beta_N"/>
    <property type="match status" value="1"/>
</dbReference>
<dbReference type="CDD" id="cd01133">
    <property type="entry name" value="F1-ATPase_beta_CD"/>
    <property type="match status" value="1"/>
</dbReference>
<dbReference type="FunFam" id="1.10.1140.10:FF:000001">
    <property type="entry name" value="ATP synthase subunit beta"/>
    <property type="match status" value="1"/>
</dbReference>
<dbReference type="FunFam" id="2.40.10.170:FF:000003">
    <property type="entry name" value="ATP synthase subunit beta"/>
    <property type="match status" value="1"/>
</dbReference>
<dbReference type="FunFam" id="3.40.50.300:FF:000004">
    <property type="entry name" value="ATP synthase subunit beta"/>
    <property type="match status" value="1"/>
</dbReference>
<dbReference type="Gene3D" id="2.40.10.170">
    <property type="match status" value="1"/>
</dbReference>
<dbReference type="Gene3D" id="1.10.1140.10">
    <property type="entry name" value="Bovine Mitochondrial F1-atpase, Atp Synthase Beta Chain, Chain D, domain 3"/>
    <property type="match status" value="1"/>
</dbReference>
<dbReference type="Gene3D" id="3.40.50.300">
    <property type="entry name" value="P-loop containing nucleotide triphosphate hydrolases"/>
    <property type="match status" value="1"/>
</dbReference>
<dbReference type="HAMAP" id="MF_01347">
    <property type="entry name" value="ATP_synth_beta_bact"/>
    <property type="match status" value="1"/>
</dbReference>
<dbReference type="InterPro" id="IPR003593">
    <property type="entry name" value="AAA+_ATPase"/>
</dbReference>
<dbReference type="InterPro" id="IPR055190">
    <property type="entry name" value="ATP-synt_VA_C"/>
</dbReference>
<dbReference type="InterPro" id="IPR005722">
    <property type="entry name" value="ATP_synth_F1_bsu"/>
</dbReference>
<dbReference type="InterPro" id="IPR020003">
    <property type="entry name" value="ATPase_a/bsu_AS"/>
</dbReference>
<dbReference type="InterPro" id="IPR050053">
    <property type="entry name" value="ATPase_alpha/beta_chains"/>
</dbReference>
<dbReference type="InterPro" id="IPR004100">
    <property type="entry name" value="ATPase_F1/V1/A1_a/bsu_N"/>
</dbReference>
<dbReference type="InterPro" id="IPR036121">
    <property type="entry name" value="ATPase_F1/V1/A1_a/bsu_N_sf"/>
</dbReference>
<dbReference type="InterPro" id="IPR000194">
    <property type="entry name" value="ATPase_F1/V1/A1_a/bsu_nucl-bd"/>
</dbReference>
<dbReference type="InterPro" id="IPR024034">
    <property type="entry name" value="ATPase_F1/V1_b/a_C"/>
</dbReference>
<dbReference type="InterPro" id="IPR027417">
    <property type="entry name" value="P-loop_NTPase"/>
</dbReference>
<dbReference type="NCBIfam" id="TIGR01039">
    <property type="entry name" value="atpD"/>
    <property type="match status" value="1"/>
</dbReference>
<dbReference type="PANTHER" id="PTHR15184">
    <property type="entry name" value="ATP SYNTHASE"/>
    <property type="match status" value="1"/>
</dbReference>
<dbReference type="PANTHER" id="PTHR15184:SF71">
    <property type="entry name" value="ATP SYNTHASE SUBUNIT BETA, MITOCHONDRIAL"/>
    <property type="match status" value="1"/>
</dbReference>
<dbReference type="Pfam" id="PF00006">
    <property type="entry name" value="ATP-synt_ab"/>
    <property type="match status" value="1"/>
</dbReference>
<dbReference type="Pfam" id="PF02874">
    <property type="entry name" value="ATP-synt_ab_N"/>
    <property type="match status" value="1"/>
</dbReference>
<dbReference type="Pfam" id="PF22919">
    <property type="entry name" value="ATP-synt_VA_C"/>
    <property type="match status" value="1"/>
</dbReference>
<dbReference type="SMART" id="SM00382">
    <property type="entry name" value="AAA"/>
    <property type="match status" value="1"/>
</dbReference>
<dbReference type="SUPFAM" id="SSF47917">
    <property type="entry name" value="C-terminal domain of alpha and beta subunits of F1 ATP synthase"/>
    <property type="match status" value="1"/>
</dbReference>
<dbReference type="SUPFAM" id="SSF50615">
    <property type="entry name" value="N-terminal domain of alpha and beta subunits of F1 ATP synthase"/>
    <property type="match status" value="1"/>
</dbReference>
<dbReference type="SUPFAM" id="SSF52540">
    <property type="entry name" value="P-loop containing nucleoside triphosphate hydrolases"/>
    <property type="match status" value="1"/>
</dbReference>
<dbReference type="PROSITE" id="PS00152">
    <property type="entry name" value="ATPASE_ALPHA_BETA"/>
    <property type="match status" value="1"/>
</dbReference>
<comment type="function">
    <text evidence="1">Produces ATP from ADP in the presence of a proton gradient across the membrane. The catalytic sites are hosted primarily by the beta subunits.</text>
</comment>
<comment type="catalytic activity">
    <reaction evidence="1">
        <text>ATP + H2O + 4 H(+)(in) = ADP + phosphate + 5 H(+)(out)</text>
        <dbReference type="Rhea" id="RHEA:57720"/>
        <dbReference type="ChEBI" id="CHEBI:15377"/>
        <dbReference type="ChEBI" id="CHEBI:15378"/>
        <dbReference type="ChEBI" id="CHEBI:30616"/>
        <dbReference type="ChEBI" id="CHEBI:43474"/>
        <dbReference type="ChEBI" id="CHEBI:456216"/>
        <dbReference type="EC" id="7.1.2.2"/>
    </reaction>
</comment>
<comment type="subunit">
    <text evidence="1">F-type ATPases have 2 components, CF(1) - the catalytic core - and CF(0) - the membrane proton channel. CF(1) has five subunits: alpha(3), beta(3), gamma(1), delta(1), epsilon(1). CF(0) has three main subunits: a(1), b(2) and c(9-12). The alpha and beta chains form an alternating ring which encloses part of the gamma chain. CF(1) is attached to CF(0) by a central stalk formed by the gamma and epsilon chains, while a peripheral stalk is formed by the delta and b chains.</text>
</comment>
<comment type="subcellular location">
    <subcellularLocation>
        <location evidence="1">Cell inner membrane</location>
        <topology evidence="1">Peripheral membrane protein</topology>
    </subcellularLocation>
</comment>
<comment type="similarity">
    <text evidence="1">Belongs to the ATPase alpha/beta chains family.</text>
</comment>
<gene>
    <name evidence="1" type="primary">atpD</name>
    <name type="ordered locus">Shal_4294</name>
</gene>
<accession>B0TQF4</accession>
<sequence>MSTGTVVQVIGAVVDVEFPHDAVPQIYDALEIKSEGLVLEVQQQLGGGVVRTIAMGTSDGLRRGLEVVNSGSPISVPVGSATLGRIMNVLGDPIDECGEIGEQERYVIHREAPSYEDQSSSTELLETGIKVIDLVCPFAKGGKVGLFGGAGVGKTVNMMELINNIAKAHSGLSVFAGVGERTREGNDFYYEMKDSGVLDKVAMVYGQMNEPPGNRLRVALTGLTMAEKFRDEGKDVLFFVDNIYRYTLAGTEVSALLGRMPSAVGYQPTLAEEMGVLQERITSTKTGSITSVQAVYVPADDLTDPSPATTFAHLDATVVLSRNIASMGIYPAVDPLDSTSRQLDPLVVGQEHYDVASGVQTVLQRYKELKDIIAILGMDELSDEDKTTVARARKIEKYLSQPFFVAEVFTGSPGKYVSLKDTIRGFKGILEGEFDHLPEQAFYMVGSIDEAVEKANKK</sequence>
<organism>
    <name type="scientific">Shewanella halifaxensis (strain HAW-EB4)</name>
    <dbReference type="NCBI Taxonomy" id="458817"/>
    <lineage>
        <taxon>Bacteria</taxon>
        <taxon>Pseudomonadati</taxon>
        <taxon>Pseudomonadota</taxon>
        <taxon>Gammaproteobacteria</taxon>
        <taxon>Alteromonadales</taxon>
        <taxon>Shewanellaceae</taxon>
        <taxon>Shewanella</taxon>
    </lineage>
</organism>
<proteinExistence type="inferred from homology"/>
<evidence type="ECO:0000255" key="1">
    <source>
        <dbReference type="HAMAP-Rule" id="MF_01347"/>
    </source>
</evidence>
<feature type="chain" id="PRO_1000086923" description="ATP synthase subunit beta">
    <location>
        <begin position="1"/>
        <end position="458"/>
    </location>
</feature>
<feature type="binding site" evidence="1">
    <location>
        <begin position="148"/>
        <end position="155"/>
    </location>
    <ligand>
        <name>ATP</name>
        <dbReference type="ChEBI" id="CHEBI:30616"/>
    </ligand>
</feature>
<name>ATPB_SHEHH</name>
<keyword id="KW-0066">ATP synthesis</keyword>
<keyword id="KW-0067">ATP-binding</keyword>
<keyword id="KW-0997">Cell inner membrane</keyword>
<keyword id="KW-1003">Cell membrane</keyword>
<keyword id="KW-0139">CF(1)</keyword>
<keyword id="KW-0375">Hydrogen ion transport</keyword>
<keyword id="KW-0406">Ion transport</keyword>
<keyword id="KW-0472">Membrane</keyword>
<keyword id="KW-0547">Nucleotide-binding</keyword>
<keyword id="KW-1278">Translocase</keyword>
<keyword id="KW-0813">Transport</keyword>